<comment type="similarity">
    <text evidence="1">Belongs to the SfsA family.</text>
</comment>
<feature type="chain" id="PRO_1000007971" description="Sugar fermentation stimulation protein homolog">
    <location>
        <begin position="1"/>
        <end position="238"/>
    </location>
</feature>
<evidence type="ECO:0000255" key="1">
    <source>
        <dbReference type="HAMAP-Rule" id="MF_00095"/>
    </source>
</evidence>
<protein>
    <recommendedName>
        <fullName evidence="1">Sugar fermentation stimulation protein homolog</fullName>
    </recommendedName>
</protein>
<accession>A5VR48</accession>
<name>SFSA_BRUO2</name>
<dbReference type="EMBL" id="CP000708">
    <property type="protein sequence ID" value="ABQ61958.1"/>
    <property type="molecule type" value="Genomic_DNA"/>
</dbReference>
<dbReference type="RefSeq" id="WP_002964399.1">
    <property type="nucleotide sequence ID" value="NC_009505.1"/>
</dbReference>
<dbReference type="SMR" id="A5VR48"/>
<dbReference type="GeneID" id="97533485"/>
<dbReference type="KEGG" id="bov:BOV_1244"/>
<dbReference type="HOGENOM" id="CLU_052299_2_0_5"/>
<dbReference type="PhylomeDB" id="A5VR48"/>
<dbReference type="Proteomes" id="UP000006383">
    <property type="component" value="Chromosome I"/>
</dbReference>
<dbReference type="GO" id="GO:0003677">
    <property type="term" value="F:DNA binding"/>
    <property type="evidence" value="ECO:0007669"/>
    <property type="project" value="InterPro"/>
</dbReference>
<dbReference type="CDD" id="cd22359">
    <property type="entry name" value="SfsA-like_bacterial"/>
    <property type="match status" value="1"/>
</dbReference>
<dbReference type="Gene3D" id="2.40.50.580">
    <property type="match status" value="1"/>
</dbReference>
<dbReference type="Gene3D" id="3.40.1350.60">
    <property type="match status" value="1"/>
</dbReference>
<dbReference type="HAMAP" id="MF_00095">
    <property type="entry name" value="SfsA"/>
    <property type="match status" value="1"/>
</dbReference>
<dbReference type="InterPro" id="IPR005224">
    <property type="entry name" value="SfsA"/>
</dbReference>
<dbReference type="InterPro" id="IPR040452">
    <property type="entry name" value="SfsA_C"/>
</dbReference>
<dbReference type="InterPro" id="IPR041465">
    <property type="entry name" value="SfsA_N"/>
</dbReference>
<dbReference type="NCBIfam" id="TIGR00230">
    <property type="entry name" value="sfsA"/>
    <property type="match status" value="1"/>
</dbReference>
<dbReference type="PANTHER" id="PTHR30545">
    <property type="entry name" value="SUGAR FERMENTATION STIMULATION PROTEIN A"/>
    <property type="match status" value="1"/>
</dbReference>
<dbReference type="PANTHER" id="PTHR30545:SF2">
    <property type="entry name" value="SUGAR FERMENTATION STIMULATION PROTEIN A"/>
    <property type="match status" value="1"/>
</dbReference>
<dbReference type="Pfam" id="PF03749">
    <property type="entry name" value="SfsA"/>
    <property type="match status" value="1"/>
</dbReference>
<dbReference type="Pfam" id="PF17746">
    <property type="entry name" value="SfsA_N"/>
    <property type="match status" value="1"/>
</dbReference>
<organism>
    <name type="scientific">Brucella ovis (strain ATCC 25840 / 63/290 / NCTC 10512)</name>
    <dbReference type="NCBI Taxonomy" id="444178"/>
    <lineage>
        <taxon>Bacteria</taxon>
        <taxon>Pseudomonadati</taxon>
        <taxon>Pseudomonadota</taxon>
        <taxon>Alphaproteobacteria</taxon>
        <taxon>Hyphomicrobiales</taxon>
        <taxon>Brucellaceae</taxon>
        <taxon>Brucella/Ochrobactrum group</taxon>
        <taxon>Brucella</taxon>
    </lineage>
</organism>
<gene>
    <name evidence="1" type="primary">sfsA</name>
    <name type="ordered locus">BOV_1244</name>
</gene>
<reference key="1">
    <citation type="journal article" date="2009" name="PLoS ONE">
        <title>Genome degradation in Brucella ovis corresponds with narrowing of its host range and tissue tropism.</title>
        <authorList>
            <person name="Tsolis R.M."/>
            <person name="Seshadri R."/>
            <person name="Santos R.L."/>
            <person name="Sangari F.J."/>
            <person name="Lobo J.M."/>
            <person name="de Jong M.F."/>
            <person name="Ren Q."/>
            <person name="Myers G."/>
            <person name="Brinkac L.M."/>
            <person name="Nelson W.C."/>
            <person name="Deboy R.T."/>
            <person name="Angiuoli S."/>
            <person name="Khouri H."/>
            <person name="Dimitrov G."/>
            <person name="Robinson J.R."/>
            <person name="Mulligan S."/>
            <person name="Walker R.L."/>
            <person name="Elzer P.E."/>
            <person name="Hassan K.A."/>
            <person name="Paulsen I.T."/>
        </authorList>
    </citation>
    <scope>NUCLEOTIDE SEQUENCE [LARGE SCALE GENOMIC DNA]</scope>
    <source>
        <strain>ATCC 25840 / 63/290 / NCTC 10512</strain>
    </source>
</reference>
<proteinExistence type="inferred from homology"/>
<sequence>MLFPTPLISGRLERRYKRFLADVTLDDGRFITASVPNTGSMLGLTAPGSRVWLSFSDAPHRKYAHTLQIVEADNTLVGVNTGLPNRIAEEAILKGLIPDLDGYATLKREQKYGRNSRIDLLLDDGPRPRAYVEVKNVHFIRTPGLAEFPDTVTARGAKHLDELVDVVAAGHRGIMLFIIQRADCSRFGISGDLDPFYARAFERAIASGVEAWAVRCHITENGIDATELVPIEDMRRIE</sequence>